<proteinExistence type="evidence at protein level"/>
<protein>
    <recommendedName>
        <fullName evidence="7">Non-reducing polyketide synthase stmB</fullName>
        <shortName evidence="7">NR-PKS stmB</shortName>
        <ecNumber evidence="6">2.3.1.-</ecNumber>
    </recommendedName>
    <alternativeName>
        <fullName evidence="7">Stromemycin biosynthesis cluster protein B</fullName>
    </alternativeName>
</protein>
<organism>
    <name type="scientific">Aspergillus ustus</name>
    <dbReference type="NCBI Taxonomy" id="40382"/>
    <lineage>
        <taxon>Eukaryota</taxon>
        <taxon>Fungi</taxon>
        <taxon>Dikarya</taxon>
        <taxon>Ascomycota</taxon>
        <taxon>Pezizomycotina</taxon>
        <taxon>Eurotiomycetes</taxon>
        <taxon>Eurotiomycetidae</taxon>
        <taxon>Eurotiales</taxon>
        <taxon>Aspergillaceae</taxon>
        <taxon>Aspergillus</taxon>
        <taxon>Aspergillus subgen. Nidulantes</taxon>
    </lineage>
</organism>
<keyword id="KW-0012">Acyltransferase</keyword>
<keyword id="KW-0511">Multifunctional enzyme</keyword>
<keyword id="KW-0596">Phosphopantetheine</keyword>
<keyword id="KW-0597">Phosphoprotein</keyword>
<keyword id="KW-1185">Reference proteome</keyword>
<keyword id="KW-0808">Transferase</keyword>
<evidence type="ECO:0000255" key="1"/>
<evidence type="ECO:0000255" key="2">
    <source>
        <dbReference type="PROSITE-ProRule" id="PRU00258"/>
    </source>
</evidence>
<evidence type="ECO:0000255" key="3">
    <source>
        <dbReference type="PROSITE-ProRule" id="PRU01348"/>
    </source>
</evidence>
<evidence type="ECO:0000255" key="4">
    <source>
        <dbReference type="PROSITE-ProRule" id="PRU01363"/>
    </source>
</evidence>
<evidence type="ECO:0000256" key="5">
    <source>
        <dbReference type="SAM" id="MobiDB-lite"/>
    </source>
</evidence>
<evidence type="ECO:0000269" key="6">
    <source>
    </source>
</evidence>
<evidence type="ECO:0000303" key="7">
    <source>
    </source>
</evidence>
<evidence type="ECO:0000305" key="8"/>
<gene>
    <name evidence="7" type="primary">stmB</name>
    <name type="ORF">HK57_00629</name>
</gene>
<comment type="function">
    <text evidence="6">Non-reducing polyketide synthase; part of the gene cluster that mediates the biosynthesis of stromemycin, a depside C-glucoside with two unsaturated C9 side chains belonging to aromatic polyketide glycosides (PubMed:38545685). The HR-PKS stmA and the NR-PKS stmB act as scaffold-generating enzymes responsible for the biosynthesis of the polyketide skeleton bininalkenylresorcylic acid. StmA condenses on acetyl-CoA starter unit with 4 malonyl-CoA units and the stmB uses 3 more malonyl-CoA units and catalyzes the depside bond formation (PubMed:38545685). The glycoytransferase stmC then acts as the tailoring enzyme responsible for 3-C-glucosylation of bininalkenylresorcylic acid to yield stromemycin (PubMed:38545685).</text>
</comment>
<comment type="cofactor">
    <cofactor evidence="2">
        <name>pantetheine 4'-phosphate</name>
        <dbReference type="ChEBI" id="CHEBI:47942"/>
    </cofactor>
</comment>
<comment type="pathway">
    <text evidence="6">Mycotoxin biosynthesis.</text>
</comment>
<comment type="domain">
    <text evidence="8">Multidomain protein; including a starter unit:ACP transacylase (SAT) that selects the starter unit; a ketosynthase (KS) that catalyzes repeated decarboxylative condensation to elongate the polyketide backbone; a malonyl-CoA:ACP transacylase (MAT) that selects and transfers the extender unit malonyl-CoA; a product template (PT) domain that controls the immediate cyclization regioselectivity of the reactive polyketide backbone; and two acyl-carrier protein (ACP) domains that serve as the tethers of the growing and completed polyketide via their phosphopantetheinyl arm.</text>
</comment>
<comment type="disruption phenotype">
    <text evidence="6">Completely abolishes the production of stromemycin.</text>
</comment>
<comment type="biotechnology">
    <text evidence="6">Stromemycin was found to show antibacterial activity against methicillin-resistant Staphylococcus aureus (MRSA) as well as significant protein tyrosine phosphatase 1B (PTP1B) inhibitory activity. Moreover, related O-glycosides show also significant anti-HIV activity or alpha-glucosidase inhibitory activity, as well as moderate cytotoxic activity against cancer cells and thus are promising candidates for drug discovery projects.</text>
</comment>
<dbReference type="EC" id="2.3.1.-" evidence="6"/>
<dbReference type="EMBL" id="JOMC01000008">
    <property type="protein sequence ID" value="KIA76012.1"/>
    <property type="molecule type" value="Genomic_DNA"/>
</dbReference>
<dbReference type="SMR" id="A0A0C1E3B7"/>
<dbReference type="Proteomes" id="UP000053475">
    <property type="component" value="Unassembled WGS sequence"/>
</dbReference>
<dbReference type="GO" id="GO:0004312">
    <property type="term" value="F:fatty acid synthase activity"/>
    <property type="evidence" value="ECO:0007669"/>
    <property type="project" value="TreeGrafter"/>
</dbReference>
<dbReference type="GO" id="GO:0031177">
    <property type="term" value="F:phosphopantetheine binding"/>
    <property type="evidence" value="ECO:0007669"/>
    <property type="project" value="InterPro"/>
</dbReference>
<dbReference type="GO" id="GO:0006633">
    <property type="term" value="P:fatty acid biosynthetic process"/>
    <property type="evidence" value="ECO:0007669"/>
    <property type="project" value="TreeGrafter"/>
</dbReference>
<dbReference type="GO" id="GO:0046189">
    <property type="term" value="P:phenol-containing compound biosynthetic process"/>
    <property type="evidence" value="ECO:0007669"/>
    <property type="project" value="UniProtKB-ARBA"/>
</dbReference>
<dbReference type="GO" id="GO:0044550">
    <property type="term" value="P:secondary metabolite biosynthetic process"/>
    <property type="evidence" value="ECO:0007669"/>
    <property type="project" value="UniProtKB-ARBA"/>
</dbReference>
<dbReference type="CDD" id="cd00833">
    <property type="entry name" value="PKS"/>
    <property type="match status" value="1"/>
</dbReference>
<dbReference type="Gene3D" id="3.30.70.3290">
    <property type="match status" value="1"/>
</dbReference>
<dbReference type="Gene3D" id="3.40.47.10">
    <property type="match status" value="1"/>
</dbReference>
<dbReference type="Gene3D" id="1.10.1200.10">
    <property type="entry name" value="ACP-like"/>
    <property type="match status" value="1"/>
</dbReference>
<dbReference type="Gene3D" id="3.40.50.1820">
    <property type="entry name" value="alpha/beta hydrolase"/>
    <property type="match status" value="1"/>
</dbReference>
<dbReference type="Gene3D" id="3.40.366.10">
    <property type="entry name" value="Malonyl-Coenzyme A Acyl Carrier Protein, domain 2"/>
    <property type="match status" value="2"/>
</dbReference>
<dbReference type="Gene3D" id="3.10.129.110">
    <property type="entry name" value="Polyketide synthase dehydratase"/>
    <property type="match status" value="1"/>
</dbReference>
<dbReference type="InterPro" id="IPR029058">
    <property type="entry name" value="AB_hydrolase_fold"/>
</dbReference>
<dbReference type="InterPro" id="IPR001227">
    <property type="entry name" value="Ac_transferase_dom_sf"/>
</dbReference>
<dbReference type="InterPro" id="IPR036736">
    <property type="entry name" value="ACP-like_sf"/>
</dbReference>
<dbReference type="InterPro" id="IPR014043">
    <property type="entry name" value="Acyl_transferase_dom"/>
</dbReference>
<dbReference type="InterPro" id="IPR016035">
    <property type="entry name" value="Acyl_Trfase/lysoPLipase"/>
</dbReference>
<dbReference type="InterPro" id="IPR014031">
    <property type="entry name" value="Ketoacyl_synth_C"/>
</dbReference>
<dbReference type="InterPro" id="IPR014030">
    <property type="entry name" value="Ketoacyl_synth_N"/>
</dbReference>
<dbReference type="InterPro" id="IPR016036">
    <property type="entry name" value="Malonyl_transacylase_ACP-bd"/>
</dbReference>
<dbReference type="InterPro" id="IPR020841">
    <property type="entry name" value="PKS_Beta-ketoAc_synthase_dom"/>
</dbReference>
<dbReference type="InterPro" id="IPR042104">
    <property type="entry name" value="PKS_dehydratase_sf"/>
</dbReference>
<dbReference type="InterPro" id="IPR049551">
    <property type="entry name" value="PKS_DH_C"/>
</dbReference>
<dbReference type="InterPro" id="IPR049552">
    <property type="entry name" value="PKS_DH_N"/>
</dbReference>
<dbReference type="InterPro" id="IPR049900">
    <property type="entry name" value="PKS_mFAS_DH"/>
</dbReference>
<dbReference type="InterPro" id="IPR050091">
    <property type="entry name" value="PKS_NRPS_Biosynth_Enz"/>
</dbReference>
<dbReference type="InterPro" id="IPR020806">
    <property type="entry name" value="PKS_PP-bd"/>
</dbReference>
<dbReference type="InterPro" id="IPR009081">
    <property type="entry name" value="PP-bd_ACP"/>
</dbReference>
<dbReference type="InterPro" id="IPR006162">
    <property type="entry name" value="Ppantetheine_attach_site"/>
</dbReference>
<dbReference type="InterPro" id="IPR030918">
    <property type="entry name" value="PT_fungal_PKS"/>
</dbReference>
<dbReference type="InterPro" id="IPR032088">
    <property type="entry name" value="SAT"/>
</dbReference>
<dbReference type="InterPro" id="IPR001031">
    <property type="entry name" value="Thioesterase"/>
</dbReference>
<dbReference type="InterPro" id="IPR016039">
    <property type="entry name" value="Thiolase-like"/>
</dbReference>
<dbReference type="NCBIfam" id="TIGR04532">
    <property type="entry name" value="PT_fungal_PKS"/>
    <property type="match status" value="1"/>
</dbReference>
<dbReference type="PANTHER" id="PTHR43775">
    <property type="entry name" value="FATTY ACID SYNTHASE"/>
    <property type="match status" value="1"/>
</dbReference>
<dbReference type="PANTHER" id="PTHR43775:SF37">
    <property type="entry name" value="SI:DKEY-61P9.11"/>
    <property type="match status" value="1"/>
</dbReference>
<dbReference type="Pfam" id="PF00698">
    <property type="entry name" value="Acyl_transf_1"/>
    <property type="match status" value="1"/>
</dbReference>
<dbReference type="Pfam" id="PF22621">
    <property type="entry name" value="CurL-like_PKS_C"/>
    <property type="match status" value="1"/>
</dbReference>
<dbReference type="Pfam" id="PF00109">
    <property type="entry name" value="ketoacyl-synt"/>
    <property type="match status" value="1"/>
</dbReference>
<dbReference type="Pfam" id="PF02801">
    <property type="entry name" value="Ketoacyl-synt_C"/>
    <property type="match status" value="1"/>
</dbReference>
<dbReference type="Pfam" id="PF21089">
    <property type="entry name" value="PKS_DH_N"/>
    <property type="match status" value="1"/>
</dbReference>
<dbReference type="Pfam" id="PF00550">
    <property type="entry name" value="PP-binding"/>
    <property type="match status" value="1"/>
</dbReference>
<dbReference type="Pfam" id="PF14765">
    <property type="entry name" value="PS-DH"/>
    <property type="match status" value="1"/>
</dbReference>
<dbReference type="Pfam" id="PF16073">
    <property type="entry name" value="SAT"/>
    <property type="match status" value="1"/>
</dbReference>
<dbReference type="Pfam" id="PF00975">
    <property type="entry name" value="Thioesterase"/>
    <property type="match status" value="1"/>
</dbReference>
<dbReference type="SMART" id="SM00827">
    <property type="entry name" value="PKS_AT"/>
    <property type="match status" value="1"/>
</dbReference>
<dbReference type="SMART" id="SM00825">
    <property type="entry name" value="PKS_KS"/>
    <property type="match status" value="1"/>
</dbReference>
<dbReference type="SMART" id="SM00823">
    <property type="entry name" value="PKS_PP"/>
    <property type="match status" value="1"/>
</dbReference>
<dbReference type="SUPFAM" id="SSF47336">
    <property type="entry name" value="ACP-like"/>
    <property type="match status" value="1"/>
</dbReference>
<dbReference type="SUPFAM" id="SSF53474">
    <property type="entry name" value="alpha/beta-Hydrolases"/>
    <property type="match status" value="1"/>
</dbReference>
<dbReference type="SUPFAM" id="SSF52151">
    <property type="entry name" value="FabD/lysophospholipase-like"/>
    <property type="match status" value="1"/>
</dbReference>
<dbReference type="SUPFAM" id="SSF55048">
    <property type="entry name" value="Probable ACP-binding domain of malonyl-CoA ACP transacylase"/>
    <property type="match status" value="1"/>
</dbReference>
<dbReference type="SUPFAM" id="SSF53901">
    <property type="entry name" value="Thiolase-like"/>
    <property type="match status" value="1"/>
</dbReference>
<dbReference type="PROSITE" id="PS50075">
    <property type="entry name" value="CARRIER"/>
    <property type="match status" value="1"/>
</dbReference>
<dbReference type="PROSITE" id="PS52004">
    <property type="entry name" value="KS3_2"/>
    <property type="match status" value="1"/>
</dbReference>
<dbReference type="PROSITE" id="PS00012">
    <property type="entry name" value="PHOSPHOPANTETHEINE"/>
    <property type="match status" value="1"/>
</dbReference>
<dbReference type="PROSITE" id="PS52019">
    <property type="entry name" value="PKS_MFAS_DH"/>
    <property type="match status" value="1"/>
</dbReference>
<feature type="chain" id="PRO_0000461502" description="Non-reducing polyketide synthase stmB">
    <location>
        <begin position="1"/>
        <end position="2059"/>
    </location>
</feature>
<feature type="domain" description="Starter acyltransferase (SAT)" evidence="1">
    <location>
        <begin position="7"/>
        <end position="243"/>
    </location>
</feature>
<feature type="domain" description="Ketosynthase family 3 (KS3)" evidence="3">
    <location>
        <begin position="366"/>
        <end position="796"/>
    </location>
</feature>
<feature type="domain" description="Malonyl-CoA:ACP transacylase (MAT)" evidence="1">
    <location>
        <begin position="895"/>
        <end position="1185"/>
    </location>
</feature>
<feature type="domain" description="PKS/mFAS DH" evidence="4">
    <location>
        <begin position="1273"/>
        <end position="1581"/>
    </location>
</feature>
<feature type="domain" description="Carrier" evidence="2">
    <location>
        <begin position="1619"/>
        <end position="1696"/>
    </location>
</feature>
<feature type="region of interest" description="N-terminal hotdog fold" evidence="4">
    <location>
        <begin position="1273"/>
        <end position="1413"/>
    </location>
</feature>
<feature type="region of interest" description="C-terminal hotdog fold" evidence="4">
    <location>
        <begin position="1435"/>
        <end position="1581"/>
    </location>
</feature>
<feature type="region of interest" description="Disordered" evidence="5">
    <location>
        <begin position="1693"/>
        <end position="1727"/>
    </location>
</feature>
<feature type="region of interest" description="Thioesterase (TE) domain" evidence="1">
    <location>
        <begin position="1778"/>
        <end position="2059"/>
    </location>
</feature>
<feature type="compositionally biased region" description="Acidic residues" evidence="5">
    <location>
        <begin position="1697"/>
        <end position="1709"/>
    </location>
</feature>
<feature type="compositionally biased region" description="Low complexity" evidence="5">
    <location>
        <begin position="1710"/>
        <end position="1719"/>
    </location>
</feature>
<feature type="active site" description="For beta-ketoacyl synthase activity" evidence="3">
    <location>
        <position position="538"/>
    </location>
</feature>
<feature type="active site" description="For beta-ketoacyl synthase activity" evidence="3">
    <location>
        <position position="673"/>
    </location>
</feature>
<feature type="active site" description="For beta-ketoacyl synthase activity" evidence="3">
    <location>
        <position position="713"/>
    </location>
</feature>
<feature type="active site" description="Proton acceptor; for dehydratase activity" evidence="4">
    <location>
        <position position="1306"/>
    </location>
</feature>
<feature type="active site" description="Proton donor; for dehydratase activity" evidence="4">
    <location>
        <position position="1495"/>
    </location>
</feature>
<feature type="modified residue" description="O-(pantetheine 4'-phosphoryl)serine" evidence="2">
    <location>
        <position position="1656"/>
    </location>
</feature>
<reference key="1">
    <citation type="submission" date="2014-11" db="EMBL/GenBank/DDBJ databases">
        <title>Genomics derived discovery of secondary metabolites biosynthetic gene clusters in Aspergillus ustus.</title>
        <authorList>
            <person name="Pi B."/>
            <person name="Dai F."/>
            <person name="Song X."/>
            <person name="Zhu C."/>
            <person name="Li H."/>
            <person name="Yu D."/>
        </authorList>
    </citation>
    <scope>NUCLEOTIDE SEQUENCE [LARGE SCALE GENOMIC DNA]</scope>
    <source>
        <strain>3.3904</strain>
    </source>
</reference>
<reference key="2">
    <citation type="journal article" date="2024" name="J. Am. Chem. Soc.">
        <title>Targeted discovery of glycosylated natural products by tailoring enzyme-guided genome mining and MS-based metabolome analysis.</title>
        <authorList>
            <person name="Chen D."/>
            <person name="Song Z."/>
            <person name="Han J."/>
            <person name="Liu J."/>
            <person name="Liu H."/>
            <person name="Dai J."/>
        </authorList>
    </citation>
    <scope>FUNCTION</scope>
    <scope>DISRUPTION PHENOTYPE</scope>
    <scope>CATALYTIC ACTIVITY</scope>
    <scope>PATHWAY</scope>
    <scope>BIOTECHNOLOGY</scope>
</reference>
<sequence length="2059" mass="224928">MGGQHFLLFGDQTVELIPSLQRLLRLSQSSPTAGVFLQNALDVIQRKTSTLSANERSNIGHFESFESILQKYSHTEDTIGVTHTVVICACRLAELIILVENDPSLLGASSKVTALGLCTGLLPAAALAGSRNISDLVSISVDTVAICFRLALELYRRTRHIEEVPGHWAYTILGIPAREMETLLEDFHRSKSTPSHRNVFIGVEEESWLTLFGPPPEFAQLFSYSAKIESAPKLKLAAYGAVHSPHLPVPDVEAIVGTSSILDRTITSRVQVLSTSTGEPYHPSTLRELFVQVSQEIVQKRLKMNIVLKSAAQRLSPTKPVQLTVVGLTNATPIVKRALDEQRLSVSVLNDPTGVSQPPGDTRAGSNSIAIVGMAGRFPGSEDLEGFWQSLLDGLDAHEEIPSDRFDIGTYFDSTGRAKNSLTTRYGCFLRNPGHFDHRLFNVSPREAEQMSPMQRLLLMSSYEALQMAGYSSNGSMSTQSQRVATYFGQAADDWKDGSRISGIDLYYIPGLQRGFTPGRLNFHYKWEGASYSVDSACASSASAIGLACSALLSRECDTALAGGVNSVTSPEPYSGLSKGSFLSPTGGCKTFQDAADGYCRGEAVGVVVLKRLEDAIHDNDNVLAVIRGHGRNHSAHASSITHPHAETQVRLYHDVLQKAGVQAQEIGFVEMHGTGTQAGDAVEMTSVLDVFGRDRTRHNPLVVGAVKANLGHTEAAAGAVSVIKSVMALQRRIIPPQPGVPFKVNHNYPDLKNLNVRIADAQIEFHKPTGGNGKRKVMVNNFDAAGGNSCLILEEAPEHAKKSQDPRAHHTVVLSARTSASLKNNKERLLEYLIAHPGTELADLAYSTTARRIHEELRSAYSGNSIESIRQQIRDDVSKQTATQGPSQKRSVAWVFSGQGSQYPGMGSELFHSNATFRASIRSMQSISHTQGFPSFIELISDKDVDLSEKTAVQVQLAVVAVEIALAYLWRSWGVNPDVVIGHSLGEYAALCVSGVLSVTDVLYLVGQRALLTEDKLTANSYAMLATVAPAQAVEEYIRRPEFESCCISCYNSPTATVISGPVSELQALESSLRSAGTVCTLVRVPYGFHSPQMDPILDGFERRARSVQFQAPRTPIASTVTASITRDSGQFTSNYLARQAREPVHFYKALAACKADGVVDQNTIWLEIGPDSVCGSMVKATLGATNVYSSLRSREANWKTISSTVAALYTSRSSISWPDFHQEYTSSLRLLDLPTYAFDTKNFWRVYEETVPVEQVTLHKAEPRKPISSSLHFVKKETVTKDEAAVIFETLLSDENLYEAIRGHLVDELPLCPSGIYCDMALTAAKYVFGKMNPKQNTVSNMAITGLTINHPVVVASKDSKQILQTSVEKNPRTGDKVTITFHLHDGSFTQEIGFCQVHTFSASEWTDEWSNASFFVKSRMEGLVQSVKAGRGDHLRRPVVYKLFAHLVDYDEKYQAIEELFWDEHSNDAVANITLKPYNGRGEFECLPYWTDPLVHLAGFVLNVNLTGSDNSVYLSGGVKRMQVYGQLSAEKKYTSYVRTHPADDHGTTLSDVYVFGQEGIVGFCSLVFQRMPRMVLHHLLHRKEAKAPVKAAPERTMTVPKSEKVHVSSQLPDAPPKHDLADQLITIVAEETGVDLVDMTPTADFASMGVDSLMSITIIDRVQKEIGVQLEASFFQENLTVSDARRALGGDETASESENDAEGDAPSDGGSPSGSWTPISPPESDVEELIVTPTKIVIEAAAKLSAPPPAEVVEVVVEPEPIVKVLPPTPTPPAVEYKSNVVLIHGRKKSNKTPLFLITDGAGSATAYLHLPRFPTGMPLYAVESPFVRCPLEYNFSVEETAEMYIAAIKKIQPEGPYNLGGWSAGGAHAFEVSRRLLESGEKVQRLIIIDMKIPKPMPEGLEVTMDFLDKVGLTTGINRAGPALAGMSERLKQHLASTIKALMVYTARPMDPARRPEKTYLIWAEYGLAEIIGDAAFKDVASMMGLKEDVEGNPMEDDTGLGSWFYSRRDNFGPNGWDKLLGPVECRTVKADHFSMVTPPAANDLGKLLQEAVA</sequence>
<accession>A0A0C1E3B7</accession>
<name>STMB_ASPUT</name>